<comment type="function">
    <text evidence="1">Formation of pseudouridine at positions 38, 39 and 40 in the anticodon stem and loop of transfer RNAs.</text>
</comment>
<comment type="catalytic activity">
    <reaction evidence="1">
        <text>uridine(38/39/40) in tRNA = pseudouridine(38/39/40) in tRNA</text>
        <dbReference type="Rhea" id="RHEA:22376"/>
        <dbReference type="Rhea" id="RHEA-COMP:10085"/>
        <dbReference type="Rhea" id="RHEA-COMP:10087"/>
        <dbReference type="ChEBI" id="CHEBI:65314"/>
        <dbReference type="ChEBI" id="CHEBI:65315"/>
        <dbReference type="EC" id="5.4.99.12"/>
    </reaction>
</comment>
<comment type="subunit">
    <text evidence="1">Homodimer.</text>
</comment>
<comment type="similarity">
    <text evidence="1">Belongs to the tRNA pseudouridine synthase TruA family.</text>
</comment>
<sequence>MVRYKATISYDGTLFSGFQRQRHLRTVQEEIEKTLYKLNNGTKIIIHGAGRTDAGVHAYGQVIHFDLPQEQEVEKLRFALDTQTPEDIDVVNIEKVADDFHCRYQKHLKTYEFLVDNGRPKNPMMRHYTTHYPYTLNIKLMQEAINGLVGTHDFTGFTAAGTSVQNKVRTITKATVSRDEKTDFLVFTFSGNGFLYKQVRNMVGTLLKIGNGQMPVEQVKVILSSKNRQLAGPTISGNGLYLKEICYEN</sequence>
<keyword id="KW-0413">Isomerase</keyword>
<keyword id="KW-1185">Reference proteome</keyword>
<keyword id="KW-0819">tRNA processing</keyword>
<protein>
    <recommendedName>
        <fullName evidence="1">tRNA pseudouridine synthase A</fullName>
        <ecNumber evidence="1">5.4.99.12</ecNumber>
    </recommendedName>
    <alternativeName>
        <fullName evidence="1">tRNA pseudouridine(38-40) synthase</fullName>
    </alternativeName>
    <alternativeName>
        <fullName evidence="1">tRNA pseudouridylate synthase I</fullName>
    </alternativeName>
    <alternativeName>
        <fullName evidence="1">tRNA-uridine isomerase I</fullName>
    </alternativeName>
</protein>
<name>TRUA_STRP1</name>
<evidence type="ECO:0000255" key="1">
    <source>
        <dbReference type="HAMAP-Rule" id="MF_00171"/>
    </source>
</evidence>
<accession>P65850</accession>
<accession>Q48WP0</accession>
<accession>Q99Y28</accession>
<feature type="chain" id="PRO_0000057464" description="tRNA pseudouridine synthase A">
    <location>
        <begin position="1"/>
        <end position="249"/>
    </location>
</feature>
<feature type="active site" description="Nucleophile" evidence="1">
    <location>
        <position position="53"/>
    </location>
</feature>
<feature type="binding site" evidence="1">
    <location>
        <position position="111"/>
    </location>
    <ligand>
        <name>substrate</name>
    </ligand>
</feature>
<gene>
    <name evidence="1" type="primary">truA</name>
    <name type="ordered locus">SPy_1901</name>
    <name type="ordered locus">M5005_Spy1617</name>
</gene>
<dbReference type="EC" id="5.4.99.12" evidence="1"/>
<dbReference type="EMBL" id="AE004092">
    <property type="protein sequence ID" value="AAK34609.1"/>
    <property type="molecule type" value="Genomic_DNA"/>
</dbReference>
<dbReference type="EMBL" id="CP000017">
    <property type="protein sequence ID" value="AAZ52235.1"/>
    <property type="molecule type" value="Genomic_DNA"/>
</dbReference>
<dbReference type="RefSeq" id="NP_269888.1">
    <property type="nucleotide sequence ID" value="NC_002737.2"/>
</dbReference>
<dbReference type="SMR" id="P65850"/>
<dbReference type="PaxDb" id="1314-HKU360_01735"/>
<dbReference type="KEGG" id="spy:SPy_1901"/>
<dbReference type="KEGG" id="spz:M5005_Spy1617"/>
<dbReference type="PATRIC" id="fig|160490.10.peg.1649"/>
<dbReference type="HOGENOM" id="CLU_014673_0_1_9"/>
<dbReference type="OMA" id="ADAFCHN"/>
<dbReference type="Proteomes" id="UP000000750">
    <property type="component" value="Chromosome"/>
</dbReference>
<dbReference type="GO" id="GO:0003723">
    <property type="term" value="F:RNA binding"/>
    <property type="evidence" value="ECO:0007669"/>
    <property type="project" value="InterPro"/>
</dbReference>
<dbReference type="GO" id="GO:0160147">
    <property type="term" value="F:tRNA pseudouridine(38-40) synthase activity"/>
    <property type="evidence" value="ECO:0007669"/>
    <property type="project" value="UniProtKB-EC"/>
</dbReference>
<dbReference type="GO" id="GO:0031119">
    <property type="term" value="P:tRNA pseudouridine synthesis"/>
    <property type="evidence" value="ECO:0007669"/>
    <property type="project" value="UniProtKB-UniRule"/>
</dbReference>
<dbReference type="CDD" id="cd02570">
    <property type="entry name" value="PseudoU_synth_EcTruA"/>
    <property type="match status" value="1"/>
</dbReference>
<dbReference type="FunFam" id="3.30.70.580:FF:000001">
    <property type="entry name" value="tRNA pseudouridine synthase A"/>
    <property type="match status" value="1"/>
</dbReference>
<dbReference type="Gene3D" id="3.30.70.660">
    <property type="entry name" value="Pseudouridine synthase I, catalytic domain, C-terminal subdomain"/>
    <property type="match status" value="1"/>
</dbReference>
<dbReference type="Gene3D" id="3.30.70.580">
    <property type="entry name" value="Pseudouridine synthase I, catalytic domain, N-terminal subdomain"/>
    <property type="match status" value="1"/>
</dbReference>
<dbReference type="HAMAP" id="MF_00171">
    <property type="entry name" value="TruA"/>
    <property type="match status" value="1"/>
</dbReference>
<dbReference type="InterPro" id="IPR020103">
    <property type="entry name" value="PsdUridine_synth_cat_dom_sf"/>
</dbReference>
<dbReference type="InterPro" id="IPR001406">
    <property type="entry name" value="PsdUridine_synth_TruA"/>
</dbReference>
<dbReference type="InterPro" id="IPR020097">
    <property type="entry name" value="PsdUridine_synth_TruA_a/b_dom"/>
</dbReference>
<dbReference type="InterPro" id="IPR020095">
    <property type="entry name" value="PsdUridine_synth_TruA_C"/>
</dbReference>
<dbReference type="InterPro" id="IPR020094">
    <property type="entry name" value="TruA/RsuA/RluB/E/F_N"/>
</dbReference>
<dbReference type="NCBIfam" id="TIGR00071">
    <property type="entry name" value="hisT_truA"/>
    <property type="match status" value="1"/>
</dbReference>
<dbReference type="PANTHER" id="PTHR11142">
    <property type="entry name" value="PSEUDOURIDYLATE SYNTHASE"/>
    <property type="match status" value="1"/>
</dbReference>
<dbReference type="PANTHER" id="PTHR11142:SF0">
    <property type="entry name" value="TRNA PSEUDOURIDINE SYNTHASE-LIKE 1"/>
    <property type="match status" value="1"/>
</dbReference>
<dbReference type="Pfam" id="PF01416">
    <property type="entry name" value="PseudoU_synth_1"/>
    <property type="match status" value="2"/>
</dbReference>
<dbReference type="PIRSF" id="PIRSF001430">
    <property type="entry name" value="tRNA_psdUrid_synth"/>
    <property type="match status" value="1"/>
</dbReference>
<dbReference type="SUPFAM" id="SSF55120">
    <property type="entry name" value="Pseudouridine synthase"/>
    <property type="match status" value="1"/>
</dbReference>
<proteinExistence type="inferred from homology"/>
<organism>
    <name type="scientific">Streptococcus pyogenes serotype M1</name>
    <dbReference type="NCBI Taxonomy" id="301447"/>
    <lineage>
        <taxon>Bacteria</taxon>
        <taxon>Bacillati</taxon>
        <taxon>Bacillota</taxon>
        <taxon>Bacilli</taxon>
        <taxon>Lactobacillales</taxon>
        <taxon>Streptococcaceae</taxon>
        <taxon>Streptococcus</taxon>
    </lineage>
</organism>
<reference key="1">
    <citation type="journal article" date="2001" name="Proc. Natl. Acad. Sci. U.S.A.">
        <title>Complete genome sequence of an M1 strain of Streptococcus pyogenes.</title>
        <authorList>
            <person name="Ferretti J.J."/>
            <person name="McShan W.M."/>
            <person name="Ajdic D.J."/>
            <person name="Savic D.J."/>
            <person name="Savic G."/>
            <person name="Lyon K."/>
            <person name="Primeaux C."/>
            <person name="Sezate S."/>
            <person name="Suvorov A.N."/>
            <person name="Kenton S."/>
            <person name="Lai H.S."/>
            <person name="Lin S.P."/>
            <person name="Qian Y."/>
            <person name="Jia H.G."/>
            <person name="Najar F.Z."/>
            <person name="Ren Q."/>
            <person name="Zhu H."/>
            <person name="Song L."/>
            <person name="White J."/>
            <person name="Yuan X."/>
            <person name="Clifton S.W."/>
            <person name="Roe B.A."/>
            <person name="McLaughlin R.E."/>
        </authorList>
    </citation>
    <scope>NUCLEOTIDE SEQUENCE [LARGE SCALE GENOMIC DNA]</scope>
    <source>
        <strain>ATCC 700294 / SF370 / Serotype M1</strain>
    </source>
</reference>
<reference key="2">
    <citation type="journal article" date="2005" name="J. Infect. Dis.">
        <title>Evolutionary origin and emergence of a highly successful clone of serotype M1 group A Streptococcus involved multiple horizontal gene transfer events.</title>
        <authorList>
            <person name="Sumby P."/>
            <person name="Porcella S.F."/>
            <person name="Madrigal A.G."/>
            <person name="Barbian K.D."/>
            <person name="Virtaneva K."/>
            <person name="Ricklefs S.M."/>
            <person name="Sturdevant D.E."/>
            <person name="Graham M.R."/>
            <person name="Vuopio-Varkila J."/>
            <person name="Hoe N.P."/>
            <person name="Musser J.M."/>
        </authorList>
    </citation>
    <scope>NUCLEOTIDE SEQUENCE [LARGE SCALE GENOMIC DNA]</scope>
    <source>
        <strain>ATCC BAA-947 / MGAS5005 / Serotype M1</strain>
    </source>
</reference>